<feature type="chain" id="PRO_0000066310" description="Uncharacterized 19.7 kDa protein in mercuric resistance operon">
    <location>
        <begin position="1"/>
        <end position="180"/>
    </location>
</feature>
<proteinExistence type="predicted"/>
<sequence length="180" mass="19727">MNLEKGNIERKKHGVHVNEYLQSVSNPNVYAAGDAAATDGLPLTPVASADSHVVASNLLKGNSKKIEYPVIPSAVFTVPKMASVGMSEEEAKNSGRNIKVKQKNISDWFTYKRTNEDFAAFKVLIDEDHDQIVGAHLISNEADELINHFATAIRFGISTKELKQMIFAYPTAASDIAHML</sequence>
<geneLocation type="plasmid">
    <name>pI258</name>
</geneLocation>
<protein>
    <recommendedName>
        <fullName>Uncharacterized 19.7 kDa protein in mercuric resistance operon</fullName>
    </recommendedName>
</protein>
<accession>P08655</accession>
<organism>
    <name type="scientific">Staphylococcus aureus</name>
    <dbReference type="NCBI Taxonomy" id="1280"/>
    <lineage>
        <taxon>Bacteria</taxon>
        <taxon>Bacillati</taxon>
        <taxon>Bacillota</taxon>
        <taxon>Bacilli</taxon>
        <taxon>Bacillales</taxon>
        <taxon>Staphylococcaceae</taxon>
        <taxon>Staphylococcus</taxon>
    </lineage>
</organism>
<dbReference type="EMBL" id="L29436">
    <property type="protein sequence ID" value="AAA98240.1"/>
    <property type="molecule type" value="Genomic_DNA"/>
</dbReference>
<dbReference type="PIR" id="G29504">
    <property type="entry name" value="G29504"/>
</dbReference>
<dbReference type="SMR" id="P08655"/>
<dbReference type="Gene3D" id="3.30.390.30">
    <property type="match status" value="1"/>
</dbReference>
<dbReference type="Gene3D" id="3.50.50.60">
    <property type="entry name" value="FAD/NAD(P)-binding domain"/>
    <property type="match status" value="1"/>
</dbReference>
<dbReference type="InterPro" id="IPR036188">
    <property type="entry name" value="FAD/NAD-bd_sf"/>
</dbReference>
<dbReference type="InterPro" id="IPR016156">
    <property type="entry name" value="FAD/NAD-linked_Rdtase_dimer_sf"/>
</dbReference>
<dbReference type="InterPro" id="IPR004099">
    <property type="entry name" value="Pyr_nucl-diS_OxRdtase_dimer"/>
</dbReference>
<dbReference type="PANTHER" id="PTHR43014:SF5">
    <property type="entry name" value="GLUTATHIONE REDUCTASE (NADPH)"/>
    <property type="match status" value="1"/>
</dbReference>
<dbReference type="PANTHER" id="PTHR43014">
    <property type="entry name" value="MERCURIC REDUCTASE"/>
    <property type="match status" value="1"/>
</dbReference>
<dbReference type="Pfam" id="PF02852">
    <property type="entry name" value="Pyr_redox_dim"/>
    <property type="match status" value="1"/>
</dbReference>
<dbReference type="PRINTS" id="PR00411">
    <property type="entry name" value="PNDRDTASEI"/>
</dbReference>
<dbReference type="SUPFAM" id="SSF51905">
    <property type="entry name" value="FAD/NAD(P)-binding domain"/>
    <property type="match status" value="1"/>
</dbReference>
<dbReference type="SUPFAM" id="SSF55424">
    <property type="entry name" value="FAD/NAD-linked reductases, dimerisation (C-terminal) domain"/>
    <property type="match status" value="1"/>
</dbReference>
<reference key="1">
    <citation type="journal article" date="1987" name="Proc. Natl. Acad. Sci. U.S.A.">
        <title>Nucleotide sequence and expression of the mercurial-resistance operon from Staphylococcus aureus plasmid pI258.</title>
        <authorList>
            <person name="Laddaga R.A."/>
            <person name="Chu L."/>
            <person name="Misra T.K."/>
            <person name="Silver S."/>
        </authorList>
    </citation>
    <scope>NUCLEOTIDE SEQUENCE [GENOMIC DNA]</scope>
</reference>
<keyword id="KW-0614">Plasmid</keyword>
<name>YMER_STAAU</name>